<sequence>MSLYECVFIARQDISTPQVETLTEELSNIITQGGGSVSKKEYWGLRNIAYRVKKNRKGHYVLLNIDAPSAAVKEMERQMSINEDVLRTLTIRVEELEEGPSAMMQSKSRDDRPRRGEGDDRPRRDDREDRPRRDREPRRMEGGE</sequence>
<accession>Q2W5G8</accession>
<reference key="1">
    <citation type="journal article" date="2005" name="DNA Res.">
        <title>Complete genome sequence of the facultative anaerobic magnetotactic bacterium Magnetospirillum sp. strain AMB-1.</title>
        <authorList>
            <person name="Matsunaga T."/>
            <person name="Okamura Y."/>
            <person name="Fukuda Y."/>
            <person name="Wahyudi A.T."/>
            <person name="Murase Y."/>
            <person name="Takeyama H."/>
        </authorList>
    </citation>
    <scope>NUCLEOTIDE SEQUENCE [LARGE SCALE GENOMIC DNA]</scope>
    <source>
        <strain>ATCC 700264 / AMB-1</strain>
    </source>
</reference>
<feature type="chain" id="PRO_1000005291" description="Small ribosomal subunit protein bS6">
    <location>
        <begin position="1"/>
        <end position="144"/>
    </location>
</feature>
<feature type="region of interest" description="Disordered" evidence="2">
    <location>
        <begin position="95"/>
        <end position="144"/>
    </location>
</feature>
<feature type="compositionally biased region" description="Basic and acidic residues" evidence="2">
    <location>
        <begin position="107"/>
        <end position="144"/>
    </location>
</feature>
<comment type="function">
    <text evidence="1">Binds together with bS18 to 16S ribosomal RNA.</text>
</comment>
<comment type="similarity">
    <text evidence="1">Belongs to the bacterial ribosomal protein bS6 family.</text>
</comment>
<gene>
    <name evidence="1" type="primary">rpsF</name>
    <name type="ordered locus">amb2103</name>
</gene>
<proteinExistence type="inferred from homology"/>
<organism>
    <name type="scientific">Paramagnetospirillum magneticum (strain ATCC 700264 / AMB-1)</name>
    <name type="common">Magnetospirillum magneticum</name>
    <dbReference type="NCBI Taxonomy" id="342108"/>
    <lineage>
        <taxon>Bacteria</taxon>
        <taxon>Pseudomonadati</taxon>
        <taxon>Pseudomonadota</taxon>
        <taxon>Alphaproteobacteria</taxon>
        <taxon>Rhodospirillales</taxon>
        <taxon>Magnetospirillaceae</taxon>
        <taxon>Paramagnetospirillum</taxon>
    </lineage>
</organism>
<protein>
    <recommendedName>
        <fullName evidence="1">Small ribosomal subunit protein bS6</fullName>
    </recommendedName>
    <alternativeName>
        <fullName evidence="3">30S ribosomal protein S6</fullName>
    </alternativeName>
</protein>
<keyword id="KW-0687">Ribonucleoprotein</keyword>
<keyword id="KW-0689">Ribosomal protein</keyword>
<keyword id="KW-0694">RNA-binding</keyword>
<keyword id="KW-0699">rRNA-binding</keyword>
<dbReference type="EMBL" id="AP007255">
    <property type="protein sequence ID" value="BAE50907.1"/>
    <property type="molecule type" value="Genomic_DNA"/>
</dbReference>
<dbReference type="RefSeq" id="WP_011384503.1">
    <property type="nucleotide sequence ID" value="NC_007626.1"/>
</dbReference>
<dbReference type="SMR" id="Q2W5G8"/>
<dbReference type="STRING" id="342108.amb2103"/>
<dbReference type="KEGG" id="mag:amb2103"/>
<dbReference type="HOGENOM" id="CLU_113441_2_0_5"/>
<dbReference type="OrthoDB" id="9812702at2"/>
<dbReference type="Proteomes" id="UP000007058">
    <property type="component" value="Chromosome"/>
</dbReference>
<dbReference type="GO" id="GO:0022627">
    <property type="term" value="C:cytosolic small ribosomal subunit"/>
    <property type="evidence" value="ECO:0007669"/>
    <property type="project" value="TreeGrafter"/>
</dbReference>
<dbReference type="GO" id="GO:0070181">
    <property type="term" value="F:small ribosomal subunit rRNA binding"/>
    <property type="evidence" value="ECO:0007669"/>
    <property type="project" value="TreeGrafter"/>
</dbReference>
<dbReference type="GO" id="GO:0003735">
    <property type="term" value="F:structural constituent of ribosome"/>
    <property type="evidence" value="ECO:0007669"/>
    <property type="project" value="InterPro"/>
</dbReference>
<dbReference type="GO" id="GO:0006412">
    <property type="term" value="P:translation"/>
    <property type="evidence" value="ECO:0007669"/>
    <property type="project" value="UniProtKB-UniRule"/>
</dbReference>
<dbReference type="CDD" id="cd00473">
    <property type="entry name" value="bS6"/>
    <property type="match status" value="1"/>
</dbReference>
<dbReference type="Gene3D" id="3.30.70.60">
    <property type="match status" value="1"/>
</dbReference>
<dbReference type="HAMAP" id="MF_00360">
    <property type="entry name" value="Ribosomal_bS6"/>
    <property type="match status" value="1"/>
</dbReference>
<dbReference type="InterPro" id="IPR000529">
    <property type="entry name" value="Ribosomal_bS6"/>
</dbReference>
<dbReference type="InterPro" id="IPR035980">
    <property type="entry name" value="Ribosomal_bS6_sf"/>
</dbReference>
<dbReference type="InterPro" id="IPR020814">
    <property type="entry name" value="Ribosomal_S6_plastid/chlpt"/>
</dbReference>
<dbReference type="InterPro" id="IPR014717">
    <property type="entry name" value="Transl_elong_EF1B/ribsomal_bS6"/>
</dbReference>
<dbReference type="NCBIfam" id="TIGR00166">
    <property type="entry name" value="S6"/>
    <property type="match status" value="1"/>
</dbReference>
<dbReference type="PANTHER" id="PTHR21011">
    <property type="entry name" value="MITOCHONDRIAL 28S RIBOSOMAL PROTEIN S6"/>
    <property type="match status" value="1"/>
</dbReference>
<dbReference type="PANTHER" id="PTHR21011:SF1">
    <property type="entry name" value="SMALL RIBOSOMAL SUBUNIT PROTEIN BS6M"/>
    <property type="match status" value="1"/>
</dbReference>
<dbReference type="Pfam" id="PF01250">
    <property type="entry name" value="Ribosomal_S6"/>
    <property type="match status" value="1"/>
</dbReference>
<dbReference type="SUPFAM" id="SSF54995">
    <property type="entry name" value="Ribosomal protein S6"/>
    <property type="match status" value="1"/>
</dbReference>
<name>RS6_PARM1</name>
<evidence type="ECO:0000255" key="1">
    <source>
        <dbReference type="HAMAP-Rule" id="MF_00360"/>
    </source>
</evidence>
<evidence type="ECO:0000256" key="2">
    <source>
        <dbReference type="SAM" id="MobiDB-lite"/>
    </source>
</evidence>
<evidence type="ECO:0000305" key="3"/>